<keyword id="KW-0997">Cell inner membrane</keyword>
<keyword id="KW-1003">Cell membrane</keyword>
<keyword id="KW-0472">Membrane</keyword>
<keyword id="KW-1185">Reference proteome</keyword>
<keyword id="KW-0808">Transferase</keyword>
<keyword id="KW-0812">Transmembrane</keyword>
<keyword id="KW-1133">Transmembrane helix</keyword>
<sequence length="291" mass="31633">MFLLITYPVFDPVAISLGPIAIRWYALAYIGGIMLGWLYARALLKSEKLWGGPAPISGLQLDDFILWVTIGIILGGRTGYVLFYNLDFFIRHPAEIFEIWKGGMSFHGGFMGCVVAVILFCRKHGLPILSLGDVATAVGPIGLFLGRIANFINSELWGRPADPSLPWAMVFPNGGPLPRHPSQLYEATLEGLVLFTILALMIRAGALKRPGLVLGSFITLYAMARIAGEFFREPDPQLGFLWGGLTMGMLLSAPMIIAGLAIICVAWSRGPRAPVAQTISTPDVSTKADRD</sequence>
<reference key="1">
    <citation type="submission" date="2006-03" db="EMBL/GenBank/DDBJ databases">
        <title>Complete sequence of chromosome of Nitrobacter hamburgensis X14.</title>
        <authorList>
            <consortium name="US DOE Joint Genome Institute"/>
            <person name="Copeland A."/>
            <person name="Lucas S."/>
            <person name="Lapidus A."/>
            <person name="Barry K."/>
            <person name="Detter J.C."/>
            <person name="Glavina del Rio T."/>
            <person name="Hammon N."/>
            <person name="Israni S."/>
            <person name="Dalin E."/>
            <person name="Tice H."/>
            <person name="Pitluck S."/>
            <person name="Chain P."/>
            <person name="Malfatti S."/>
            <person name="Shin M."/>
            <person name="Vergez L."/>
            <person name="Schmutz J."/>
            <person name="Larimer F."/>
            <person name="Land M."/>
            <person name="Hauser L."/>
            <person name="Kyrpides N."/>
            <person name="Ivanova N."/>
            <person name="Ward B."/>
            <person name="Arp D."/>
            <person name="Klotz M."/>
            <person name="Stein L."/>
            <person name="O'Mullan G."/>
            <person name="Starkenburg S."/>
            <person name="Sayavedra L."/>
            <person name="Poret-Peterson A.T."/>
            <person name="Gentry M.E."/>
            <person name="Bruce D."/>
            <person name="Richardson P."/>
        </authorList>
    </citation>
    <scope>NUCLEOTIDE SEQUENCE [LARGE SCALE GENOMIC DNA]</scope>
    <source>
        <strain>DSM 10229 / NCIMB 13809 / X14</strain>
    </source>
</reference>
<name>LGT_NITHX</name>
<proteinExistence type="inferred from homology"/>
<evidence type="ECO:0000255" key="1">
    <source>
        <dbReference type="HAMAP-Rule" id="MF_01147"/>
    </source>
</evidence>
<gene>
    <name evidence="1" type="primary">lgt</name>
    <name type="ordered locus">Nham_3095</name>
</gene>
<organism>
    <name type="scientific">Nitrobacter hamburgensis (strain DSM 10229 / NCIMB 13809 / X14)</name>
    <dbReference type="NCBI Taxonomy" id="323097"/>
    <lineage>
        <taxon>Bacteria</taxon>
        <taxon>Pseudomonadati</taxon>
        <taxon>Pseudomonadota</taxon>
        <taxon>Alphaproteobacteria</taxon>
        <taxon>Hyphomicrobiales</taxon>
        <taxon>Nitrobacteraceae</taxon>
        <taxon>Nitrobacter</taxon>
    </lineage>
</organism>
<protein>
    <recommendedName>
        <fullName evidence="1">Phosphatidylglycerol--prolipoprotein diacylglyceryl transferase</fullName>
        <ecNumber evidence="1">2.5.1.145</ecNumber>
    </recommendedName>
</protein>
<accession>Q1QIW5</accession>
<dbReference type="EC" id="2.5.1.145" evidence="1"/>
<dbReference type="EMBL" id="CP000319">
    <property type="protein sequence ID" value="ABE63832.1"/>
    <property type="molecule type" value="Genomic_DNA"/>
</dbReference>
<dbReference type="RefSeq" id="WP_011511491.1">
    <property type="nucleotide sequence ID" value="NC_007964.1"/>
</dbReference>
<dbReference type="SMR" id="Q1QIW5"/>
<dbReference type="STRING" id="323097.Nham_3095"/>
<dbReference type="KEGG" id="nha:Nham_3095"/>
<dbReference type="eggNOG" id="COG0682">
    <property type="taxonomic scope" value="Bacteria"/>
</dbReference>
<dbReference type="HOGENOM" id="CLU_013386_1_0_5"/>
<dbReference type="OrthoDB" id="871140at2"/>
<dbReference type="UniPathway" id="UPA00664"/>
<dbReference type="Proteomes" id="UP000001953">
    <property type="component" value="Chromosome"/>
</dbReference>
<dbReference type="GO" id="GO:0005886">
    <property type="term" value="C:plasma membrane"/>
    <property type="evidence" value="ECO:0007669"/>
    <property type="project" value="UniProtKB-SubCell"/>
</dbReference>
<dbReference type="GO" id="GO:0008961">
    <property type="term" value="F:phosphatidylglycerol-prolipoprotein diacylglyceryl transferase activity"/>
    <property type="evidence" value="ECO:0007669"/>
    <property type="project" value="UniProtKB-UniRule"/>
</dbReference>
<dbReference type="GO" id="GO:0042158">
    <property type="term" value="P:lipoprotein biosynthetic process"/>
    <property type="evidence" value="ECO:0007669"/>
    <property type="project" value="UniProtKB-UniRule"/>
</dbReference>
<dbReference type="HAMAP" id="MF_01147">
    <property type="entry name" value="Lgt"/>
    <property type="match status" value="1"/>
</dbReference>
<dbReference type="InterPro" id="IPR001640">
    <property type="entry name" value="Lgt"/>
</dbReference>
<dbReference type="NCBIfam" id="TIGR00544">
    <property type="entry name" value="lgt"/>
    <property type="match status" value="1"/>
</dbReference>
<dbReference type="PANTHER" id="PTHR30589:SF0">
    <property type="entry name" value="PHOSPHATIDYLGLYCEROL--PROLIPOPROTEIN DIACYLGLYCERYL TRANSFERASE"/>
    <property type="match status" value="1"/>
</dbReference>
<dbReference type="PANTHER" id="PTHR30589">
    <property type="entry name" value="PROLIPOPROTEIN DIACYLGLYCERYL TRANSFERASE"/>
    <property type="match status" value="1"/>
</dbReference>
<dbReference type="Pfam" id="PF01790">
    <property type="entry name" value="LGT"/>
    <property type="match status" value="1"/>
</dbReference>
<dbReference type="PROSITE" id="PS01311">
    <property type="entry name" value="LGT"/>
    <property type="match status" value="1"/>
</dbReference>
<comment type="function">
    <text evidence="1">Catalyzes the transfer of the diacylglyceryl group from phosphatidylglycerol to the sulfhydryl group of the N-terminal cysteine of a prolipoprotein, the first step in the formation of mature lipoproteins.</text>
</comment>
<comment type="catalytic activity">
    <reaction evidence="1">
        <text>L-cysteinyl-[prolipoprotein] + a 1,2-diacyl-sn-glycero-3-phospho-(1'-sn-glycerol) = an S-1,2-diacyl-sn-glyceryl-L-cysteinyl-[prolipoprotein] + sn-glycerol 1-phosphate + H(+)</text>
        <dbReference type="Rhea" id="RHEA:56712"/>
        <dbReference type="Rhea" id="RHEA-COMP:14679"/>
        <dbReference type="Rhea" id="RHEA-COMP:14680"/>
        <dbReference type="ChEBI" id="CHEBI:15378"/>
        <dbReference type="ChEBI" id="CHEBI:29950"/>
        <dbReference type="ChEBI" id="CHEBI:57685"/>
        <dbReference type="ChEBI" id="CHEBI:64716"/>
        <dbReference type="ChEBI" id="CHEBI:140658"/>
        <dbReference type="EC" id="2.5.1.145"/>
    </reaction>
</comment>
<comment type="pathway">
    <text evidence="1">Protein modification; lipoprotein biosynthesis (diacylglyceryl transfer).</text>
</comment>
<comment type="subcellular location">
    <subcellularLocation>
        <location evidence="1">Cell inner membrane</location>
        <topology evidence="1">Multi-pass membrane protein</topology>
    </subcellularLocation>
</comment>
<comment type="similarity">
    <text evidence="1">Belongs to the Lgt family.</text>
</comment>
<feature type="chain" id="PRO_1000053459" description="Phosphatidylglycerol--prolipoprotein diacylglyceryl transferase">
    <location>
        <begin position="1"/>
        <end position="291"/>
    </location>
</feature>
<feature type="transmembrane region" description="Helical" evidence="1">
    <location>
        <begin position="24"/>
        <end position="44"/>
    </location>
</feature>
<feature type="transmembrane region" description="Helical" evidence="1">
    <location>
        <begin position="64"/>
        <end position="84"/>
    </location>
</feature>
<feature type="transmembrane region" description="Helical" evidence="1">
    <location>
        <begin position="99"/>
        <end position="119"/>
    </location>
</feature>
<feature type="transmembrane region" description="Helical" evidence="1">
    <location>
        <begin position="125"/>
        <end position="145"/>
    </location>
</feature>
<feature type="transmembrane region" description="Helical" evidence="1">
    <location>
        <begin position="187"/>
        <end position="207"/>
    </location>
</feature>
<feature type="transmembrane region" description="Helical" evidence="1">
    <location>
        <begin position="211"/>
        <end position="231"/>
    </location>
</feature>
<feature type="transmembrane region" description="Helical" evidence="1">
    <location>
        <begin position="247"/>
        <end position="267"/>
    </location>
</feature>
<feature type="binding site" evidence="1">
    <location>
        <position position="147"/>
    </location>
    <ligand>
        <name>a 1,2-diacyl-sn-glycero-3-phospho-(1'-sn-glycerol)</name>
        <dbReference type="ChEBI" id="CHEBI:64716"/>
    </ligand>
</feature>